<sequence>MPDIVNRKVEHVEIAAFENVDGLSSSTFLNDVILVHQGFPGISFSEINTKTKFFRKEISAPIMVTGMTGGRNELGRINRIIAEVAEKFGIPMGVGSQRVAIEKAEARESFTIVRKVAPTIPIIANLGMPQLVKGYGLKEFQDAIQMIEADAIAVHLNPAQEVFQPEGEPEYQIYALERLRDISKELSVPIIVKESGNGISMETAKLLYSYGIKNFDTSGQGGTNWIAIEMIRDIRRGNWKAESAKNFLDWGVPTAASIIEVRYSIPDAFLVGSGGIRSGLDAAKAIALGADIAGMALPVLKSAIEGKESLEQFFRKIIFELKATMMLTGSKNVEALKRSSIVILGKLKEWAEYRGINLSIYEKVRKRE</sequence>
<proteinExistence type="inferred from homology"/>
<gene>
    <name evidence="1" type="primary">fni</name>
    <name type="ordered locus">SSO0063</name>
    <name type="ORF">C05008</name>
    <name type="ORF">C05_047</name>
</gene>
<keyword id="KW-0963">Cytoplasm</keyword>
<keyword id="KW-0285">Flavoprotein</keyword>
<keyword id="KW-0288">FMN</keyword>
<keyword id="KW-0413">Isomerase</keyword>
<keyword id="KW-0414">Isoprene biosynthesis</keyword>
<keyword id="KW-0460">Magnesium</keyword>
<keyword id="KW-0479">Metal-binding</keyword>
<keyword id="KW-0521">NADP</keyword>
<keyword id="KW-1185">Reference proteome</keyword>
<feature type="chain" id="PRO_0000134455" description="Isopentenyl-diphosphate delta-isomerase">
    <location>
        <begin position="1"/>
        <end position="368"/>
    </location>
</feature>
<feature type="binding site" evidence="1">
    <location>
        <begin position="7"/>
        <end position="8"/>
    </location>
    <ligand>
        <name>substrate</name>
    </ligand>
</feature>
<feature type="binding site" evidence="1">
    <location>
        <position position="65"/>
    </location>
    <ligand>
        <name>FMN</name>
        <dbReference type="ChEBI" id="CHEBI:58210"/>
    </ligand>
</feature>
<feature type="binding site" evidence="1">
    <location>
        <begin position="66"/>
        <end position="68"/>
    </location>
    <ligand>
        <name>FMN</name>
        <dbReference type="ChEBI" id="CHEBI:58210"/>
    </ligand>
</feature>
<feature type="binding site" evidence="1">
    <location>
        <begin position="96"/>
        <end position="98"/>
    </location>
    <ligand>
        <name>substrate</name>
    </ligand>
</feature>
<feature type="binding site" evidence="1">
    <location>
        <position position="96"/>
    </location>
    <ligand>
        <name>FMN</name>
        <dbReference type="ChEBI" id="CHEBI:58210"/>
    </ligand>
</feature>
<feature type="binding site" evidence="1">
    <location>
        <position position="125"/>
    </location>
    <ligand>
        <name>FMN</name>
        <dbReference type="ChEBI" id="CHEBI:58210"/>
    </ligand>
</feature>
<feature type="binding site" evidence="1">
    <location>
        <position position="160"/>
    </location>
    <ligand>
        <name>substrate</name>
    </ligand>
</feature>
<feature type="binding site" evidence="1">
    <location>
        <position position="161"/>
    </location>
    <ligand>
        <name>Mg(2+)</name>
        <dbReference type="ChEBI" id="CHEBI:18420"/>
    </ligand>
</feature>
<feature type="binding site" evidence="1">
    <location>
        <position position="193"/>
    </location>
    <ligand>
        <name>FMN</name>
        <dbReference type="ChEBI" id="CHEBI:58210"/>
    </ligand>
</feature>
<feature type="binding site" evidence="1">
    <location>
        <position position="218"/>
    </location>
    <ligand>
        <name>FMN</name>
        <dbReference type="ChEBI" id="CHEBI:58210"/>
    </ligand>
</feature>
<feature type="binding site" evidence="1">
    <location>
        <position position="223"/>
    </location>
    <ligand>
        <name>FMN</name>
        <dbReference type="ChEBI" id="CHEBI:58210"/>
    </ligand>
</feature>
<feature type="binding site" evidence="1">
    <location>
        <begin position="275"/>
        <end position="277"/>
    </location>
    <ligand>
        <name>FMN</name>
        <dbReference type="ChEBI" id="CHEBI:58210"/>
    </ligand>
</feature>
<feature type="binding site" evidence="1">
    <location>
        <begin position="296"/>
        <end position="297"/>
    </location>
    <ligand>
        <name>FMN</name>
        <dbReference type="ChEBI" id="CHEBI:58210"/>
    </ligand>
</feature>
<reference key="1">
    <citation type="journal article" date="1996" name="Mol. Microbiol.">
        <title>Organizational characteristics and information content of an archaeal genome: 156 kb of sequence from Sulfolobus solfataricus P2.</title>
        <authorList>
            <person name="Sensen C.W."/>
            <person name="Klenk H.-P."/>
            <person name="Singh R.K."/>
            <person name="Allard G."/>
            <person name="Chan C.C.-Y."/>
            <person name="Liu Q.Y."/>
            <person name="Penny S.L."/>
            <person name="Young F."/>
            <person name="Schenk M.E."/>
            <person name="Gaasterland T."/>
            <person name="Doolittle W.F."/>
            <person name="Ragan M.A."/>
            <person name="Charlebois R.L."/>
        </authorList>
    </citation>
    <scope>NUCLEOTIDE SEQUENCE [GENOMIC DNA]</scope>
    <source>
        <strain>ATCC 35092 / DSM 1617 / JCM 11322 / P2</strain>
    </source>
</reference>
<reference key="2">
    <citation type="journal article" date="2001" name="Proc. Natl. Acad. Sci. U.S.A.">
        <title>The complete genome of the crenarchaeon Sulfolobus solfataricus P2.</title>
        <authorList>
            <person name="She Q."/>
            <person name="Singh R.K."/>
            <person name="Confalonieri F."/>
            <person name="Zivanovic Y."/>
            <person name="Allard G."/>
            <person name="Awayez M.J."/>
            <person name="Chan-Weiher C.C.-Y."/>
            <person name="Clausen I.G."/>
            <person name="Curtis B.A."/>
            <person name="De Moors A."/>
            <person name="Erauso G."/>
            <person name="Fletcher C."/>
            <person name="Gordon P.M.K."/>
            <person name="Heikamp-de Jong I."/>
            <person name="Jeffries A.C."/>
            <person name="Kozera C.J."/>
            <person name="Medina N."/>
            <person name="Peng X."/>
            <person name="Thi-Ngoc H.P."/>
            <person name="Redder P."/>
            <person name="Schenk M.E."/>
            <person name="Theriault C."/>
            <person name="Tolstrup N."/>
            <person name="Charlebois R.L."/>
            <person name="Doolittle W.F."/>
            <person name="Duguet M."/>
            <person name="Gaasterland T."/>
            <person name="Garrett R.A."/>
            <person name="Ragan M.A."/>
            <person name="Sensen C.W."/>
            <person name="Van der Oost J."/>
        </authorList>
    </citation>
    <scope>NUCLEOTIDE SEQUENCE [LARGE SCALE GENOMIC DNA]</scope>
    <source>
        <strain>ATCC 35092 / DSM 1617 / JCM 11322 / P2</strain>
    </source>
</reference>
<organism>
    <name type="scientific">Saccharolobus solfataricus (strain ATCC 35092 / DSM 1617 / JCM 11322 / P2)</name>
    <name type="common">Sulfolobus solfataricus</name>
    <dbReference type="NCBI Taxonomy" id="273057"/>
    <lineage>
        <taxon>Archaea</taxon>
        <taxon>Thermoproteota</taxon>
        <taxon>Thermoprotei</taxon>
        <taxon>Sulfolobales</taxon>
        <taxon>Sulfolobaceae</taxon>
        <taxon>Saccharolobus</taxon>
    </lineage>
</organism>
<comment type="function">
    <text evidence="1">Involved in the biosynthesis of isoprenoids. Catalyzes the 1,3-allylic rearrangement of the homoallylic substrate isopentenyl (IPP) to its allylic isomer, dimethylallyl diphosphate (DMAPP).</text>
</comment>
<comment type="catalytic activity">
    <reaction evidence="1">
        <text>isopentenyl diphosphate = dimethylallyl diphosphate</text>
        <dbReference type="Rhea" id="RHEA:23284"/>
        <dbReference type="ChEBI" id="CHEBI:57623"/>
        <dbReference type="ChEBI" id="CHEBI:128769"/>
        <dbReference type="EC" id="5.3.3.2"/>
    </reaction>
</comment>
<comment type="cofactor">
    <cofactor evidence="1">
        <name>FMN</name>
        <dbReference type="ChEBI" id="CHEBI:58210"/>
    </cofactor>
</comment>
<comment type="cofactor">
    <cofactor evidence="1">
        <name>NADPH</name>
        <dbReference type="ChEBI" id="CHEBI:57783"/>
    </cofactor>
</comment>
<comment type="cofactor">
    <cofactor evidence="1">
        <name>Mg(2+)</name>
        <dbReference type="ChEBI" id="CHEBI:18420"/>
    </cofactor>
</comment>
<comment type="subunit">
    <text evidence="1">Homooctamer. Dimer of tetramers.</text>
</comment>
<comment type="subcellular location">
    <subcellularLocation>
        <location evidence="1">Cytoplasm</location>
    </subcellularLocation>
</comment>
<comment type="similarity">
    <text evidence="1">Belongs to the IPP isomerase type 2 family.</text>
</comment>
<dbReference type="EC" id="5.3.3.2" evidence="1"/>
<dbReference type="EMBL" id="Y08257">
    <property type="protein sequence ID" value="CAA69539.1"/>
    <property type="molecule type" value="Genomic_DNA"/>
</dbReference>
<dbReference type="EMBL" id="AE006641">
    <property type="protein sequence ID" value="AAK40424.1"/>
    <property type="molecule type" value="Genomic_DNA"/>
</dbReference>
<dbReference type="PIR" id="S75425">
    <property type="entry name" value="S75425"/>
</dbReference>
<dbReference type="RefSeq" id="WP_009988866.1">
    <property type="nucleotide sequence ID" value="NC_002754.1"/>
</dbReference>
<dbReference type="SMR" id="P95997"/>
<dbReference type="FunCoup" id="P95997">
    <property type="interactions" value="16"/>
</dbReference>
<dbReference type="STRING" id="273057.SSO0063"/>
<dbReference type="PaxDb" id="273057-SSO0063"/>
<dbReference type="EnsemblBacteria" id="AAK40424">
    <property type="protein sequence ID" value="AAK40424"/>
    <property type="gene ID" value="SSO0063"/>
</dbReference>
<dbReference type="GeneID" id="44129025"/>
<dbReference type="KEGG" id="sso:SSO0063"/>
<dbReference type="PATRIC" id="fig|273057.12.peg.63"/>
<dbReference type="eggNOG" id="arCOG00613">
    <property type="taxonomic scope" value="Archaea"/>
</dbReference>
<dbReference type="HOGENOM" id="CLU_065515_1_0_2"/>
<dbReference type="InParanoid" id="P95997"/>
<dbReference type="PhylomeDB" id="P95997"/>
<dbReference type="Proteomes" id="UP000001974">
    <property type="component" value="Chromosome"/>
</dbReference>
<dbReference type="GO" id="GO:0005737">
    <property type="term" value="C:cytoplasm"/>
    <property type="evidence" value="ECO:0007669"/>
    <property type="project" value="UniProtKB-SubCell"/>
</dbReference>
<dbReference type="GO" id="GO:0010181">
    <property type="term" value="F:FMN binding"/>
    <property type="evidence" value="ECO:0007669"/>
    <property type="project" value="UniProtKB-UniRule"/>
</dbReference>
<dbReference type="GO" id="GO:0004452">
    <property type="term" value="F:isopentenyl-diphosphate delta-isomerase activity"/>
    <property type="evidence" value="ECO:0007669"/>
    <property type="project" value="UniProtKB-UniRule"/>
</dbReference>
<dbReference type="GO" id="GO:0000287">
    <property type="term" value="F:magnesium ion binding"/>
    <property type="evidence" value="ECO:0007669"/>
    <property type="project" value="UniProtKB-UniRule"/>
</dbReference>
<dbReference type="GO" id="GO:0070402">
    <property type="term" value="F:NADPH binding"/>
    <property type="evidence" value="ECO:0007669"/>
    <property type="project" value="UniProtKB-UniRule"/>
</dbReference>
<dbReference type="GO" id="GO:0016491">
    <property type="term" value="F:oxidoreductase activity"/>
    <property type="evidence" value="ECO:0007669"/>
    <property type="project" value="InterPro"/>
</dbReference>
<dbReference type="GO" id="GO:0008299">
    <property type="term" value="P:isoprenoid biosynthetic process"/>
    <property type="evidence" value="ECO:0007669"/>
    <property type="project" value="UniProtKB-UniRule"/>
</dbReference>
<dbReference type="CDD" id="cd02811">
    <property type="entry name" value="IDI-2_FMN"/>
    <property type="match status" value="1"/>
</dbReference>
<dbReference type="Gene3D" id="3.20.20.70">
    <property type="entry name" value="Aldolase class I"/>
    <property type="match status" value="1"/>
</dbReference>
<dbReference type="HAMAP" id="MF_00354">
    <property type="entry name" value="Idi_2"/>
    <property type="match status" value="1"/>
</dbReference>
<dbReference type="InterPro" id="IPR013785">
    <property type="entry name" value="Aldolase_TIM"/>
</dbReference>
<dbReference type="InterPro" id="IPR000262">
    <property type="entry name" value="FMN-dep_DH"/>
</dbReference>
<dbReference type="InterPro" id="IPR011179">
    <property type="entry name" value="IPdP_isomerase"/>
</dbReference>
<dbReference type="NCBIfam" id="TIGR02151">
    <property type="entry name" value="IPP_isom_2"/>
    <property type="match status" value="1"/>
</dbReference>
<dbReference type="PANTHER" id="PTHR43665">
    <property type="entry name" value="ISOPENTENYL-DIPHOSPHATE DELTA-ISOMERASE"/>
    <property type="match status" value="1"/>
</dbReference>
<dbReference type="PANTHER" id="PTHR43665:SF1">
    <property type="entry name" value="ISOPENTENYL-DIPHOSPHATE DELTA-ISOMERASE"/>
    <property type="match status" value="1"/>
</dbReference>
<dbReference type="Pfam" id="PF01070">
    <property type="entry name" value="FMN_dh"/>
    <property type="match status" value="1"/>
</dbReference>
<dbReference type="PIRSF" id="PIRSF003314">
    <property type="entry name" value="IPP_isomerase"/>
    <property type="match status" value="1"/>
</dbReference>
<dbReference type="SMART" id="SM01240">
    <property type="entry name" value="IMPDH"/>
    <property type="match status" value="1"/>
</dbReference>
<dbReference type="SUPFAM" id="SSF51395">
    <property type="entry name" value="FMN-linked oxidoreductases"/>
    <property type="match status" value="1"/>
</dbReference>
<name>IDI2_SACS2</name>
<protein>
    <recommendedName>
        <fullName evidence="1">Isopentenyl-diphosphate delta-isomerase</fullName>
        <shortName evidence="1">IPP isomerase</shortName>
        <ecNumber evidence="1">5.3.3.2</ecNumber>
    </recommendedName>
    <alternativeName>
        <fullName evidence="1">Isopentenyl diphosphate:dimethylallyl diphosphate isomerase</fullName>
    </alternativeName>
    <alternativeName>
        <fullName evidence="1">Isopentenyl pyrophosphate isomerase</fullName>
    </alternativeName>
    <alternativeName>
        <fullName evidence="1">Type 2 isopentenyl diphosphate isomerase</fullName>
        <shortName evidence="1">IDI-2</shortName>
    </alternativeName>
</protein>
<accession>P95997</accession>
<evidence type="ECO:0000255" key="1">
    <source>
        <dbReference type="HAMAP-Rule" id="MF_00354"/>
    </source>
</evidence>